<accession>Q8HVU4</accession>
<sequence length="166" mass="19504">MFPMVTEFMNYGQQTVRAARYIGQGFMITLSHANRLPVTIQYPYEKLITSERFRGRIHFEFDKCIACEVCVRVCPIDLPVVDWQLETDIRKKRLVNYSIDFGICIFCGNCVEYCPTNCLSMTEEYELSTYDRHELNYNQIALGRLPMSIIDDYTIRTILNLPERKT</sequence>
<comment type="function">
    <text evidence="1">NDH shuttles electrons from NAD(P)H:plastoquinone, via FMN and iron-sulfur (Fe-S) centers, to quinones in the photosynthetic chain and possibly in a chloroplast respiratory chain. The immediate electron acceptor for the enzyme in this species is believed to be plastoquinone. Couples the redox reaction to proton translocation, and thus conserves the redox energy in a proton gradient.</text>
</comment>
<comment type="catalytic activity">
    <reaction evidence="1">
        <text>a plastoquinone + NADH + (n+1) H(+)(in) = a plastoquinol + NAD(+) + n H(+)(out)</text>
        <dbReference type="Rhea" id="RHEA:42608"/>
        <dbReference type="Rhea" id="RHEA-COMP:9561"/>
        <dbReference type="Rhea" id="RHEA-COMP:9562"/>
        <dbReference type="ChEBI" id="CHEBI:15378"/>
        <dbReference type="ChEBI" id="CHEBI:17757"/>
        <dbReference type="ChEBI" id="CHEBI:57540"/>
        <dbReference type="ChEBI" id="CHEBI:57945"/>
        <dbReference type="ChEBI" id="CHEBI:62192"/>
    </reaction>
</comment>
<comment type="catalytic activity">
    <reaction evidence="1">
        <text>a plastoquinone + NADPH + (n+1) H(+)(in) = a plastoquinol + NADP(+) + n H(+)(out)</text>
        <dbReference type="Rhea" id="RHEA:42612"/>
        <dbReference type="Rhea" id="RHEA-COMP:9561"/>
        <dbReference type="Rhea" id="RHEA-COMP:9562"/>
        <dbReference type="ChEBI" id="CHEBI:15378"/>
        <dbReference type="ChEBI" id="CHEBI:17757"/>
        <dbReference type="ChEBI" id="CHEBI:57783"/>
        <dbReference type="ChEBI" id="CHEBI:58349"/>
        <dbReference type="ChEBI" id="CHEBI:62192"/>
    </reaction>
</comment>
<comment type="cofactor">
    <cofactor evidence="1">
        <name>[4Fe-4S] cluster</name>
        <dbReference type="ChEBI" id="CHEBI:49883"/>
    </cofactor>
    <text evidence="1">Binds 2 [4Fe-4S] clusters per subunit.</text>
</comment>
<comment type="subunit">
    <text evidence="1">NDH is composed of at least 16 different subunits, 5 of which are encoded in the nucleus.</text>
</comment>
<comment type="subcellular location">
    <subcellularLocation>
        <location evidence="1">Plastid</location>
        <location evidence="1">Chloroplast thylakoid membrane</location>
        <topology evidence="1">Peripheral membrane protein</topology>
    </subcellularLocation>
</comment>
<comment type="similarity">
    <text evidence="1">Belongs to the complex I 23 kDa subunit family.</text>
</comment>
<protein>
    <recommendedName>
        <fullName evidence="1">NAD(P)H-quinone oxidoreductase subunit I, chloroplastic</fullName>
        <ecNumber evidence="1">7.1.1.-</ecNumber>
    </recommendedName>
    <alternativeName>
        <fullName evidence="1">NAD(P)H dehydrogenase subunit I</fullName>
        <shortName evidence="1">NDH subunit I</shortName>
    </alternativeName>
    <alternativeName>
        <fullName evidence="1">NADH-plastoquinone oxidoreductase subunit I</fullName>
    </alternativeName>
</protein>
<reference key="1">
    <citation type="submission" date="2003-01" db="EMBL/GenBank/DDBJ databases">
        <title>Chloroplast DNA phylogeny of tribe Heliantheae (Asteraceae).</title>
        <authorList>
            <person name="Panero J.L."/>
            <person name="Baldwin B.G."/>
            <person name="Schilling E.E."/>
            <person name="Clevinger J.A."/>
        </authorList>
    </citation>
    <scope>NUCLEOTIDE SEQUENCE [GENOMIC DNA]</scope>
</reference>
<dbReference type="EC" id="7.1.1.-" evidence="1"/>
<dbReference type="EMBL" id="AF383768">
    <property type="protein sequence ID" value="AAN61710.1"/>
    <property type="molecule type" value="Genomic_DNA"/>
</dbReference>
<dbReference type="SMR" id="Q8HVU4"/>
<dbReference type="GO" id="GO:0009535">
    <property type="term" value="C:chloroplast thylakoid membrane"/>
    <property type="evidence" value="ECO:0007669"/>
    <property type="project" value="UniProtKB-SubCell"/>
</dbReference>
<dbReference type="GO" id="GO:0051539">
    <property type="term" value="F:4 iron, 4 sulfur cluster binding"/>
    <property type="evidence" value="ECO:0007669"/>
    <property type="project" value="UniProtKB-KW"/>
</dbReference>
<dbReference type="GO" id="GO:0005506">
    <property type="term" value="F:iron ion binding"/>
    <property type="evidence" value="ECO:0007669"/>
    <property type="project" value="UniProtKB-UniRule"/>
</dbReference>
<dbReference type="GO" id="GO:0008137">
    <property type="term" value="F:NADH dehydrogenase (ubiquinone) activity"/>
    <property type="evidence" value="ECO:0007669"/>
    <property type="project" value="InterPro"/>
</dbReference>
<dbReference type="GO" id="GO:0048038">
    <property type="term" value="F:quinone binding"/>
    <property type="evidence" value="ECO:0007669"/>
    <property type="project" value="UniProtKB-KW"/>
</dbReference>
<dbReference type="GO" id="GO:0019684">
    <property type="term" value="P:photosynthesis, light reaction"/>
    <property type="evidence" value="ECO:0007669"/>
    <property type="project" value="UniProtKB-UniRule"/>
</dbReference>
<dbReference type="FunFam" id="3.30.70.3270:FF:000006">
    <property type="entry name" value="NAD(P)H-quinone oxidoreductase subunit I, chloroplastic"/>
    <property type="match status" value="1"/>
</dbReference>
<dbReference type="Gene3D" id="3.30.70.3270">
    <property type="match status" value="1"/>
</dbReference>
<dbReference type="HAMAP" id="MF_01351">
    <property type="entry name" value="NDH1_NuoI"/>
    <property type="match status" value="1"/>
</dbReference>
<dbReference type="InterPro" id="IPR017896">
    <property type="entry name" value="4Fe4S_Fe-S-bd"/>
</dbReference>
<dbReference type="InterPro" id="IPR017900">
    <property type="entry name" value="4Fe4S_Fe_S_CS"/>
</dbReference>
<dbReference type="InterPro" id="IPR010226">
    <property type="entry name" value="NADH_quinone_OxRdtase_chainI"/>
</dbReference>
<dbReference type="InterPro" id="IPR004497">
    <property type="entry name" value="NDHI"/>
</dbReference>
<dbReference type="NCBIfam" id="TIGR00403">
    <property type="entry name" value="ndhI"/>
    <property type="match status" value="1"/>
</dbReference>
<dbReference type="NCBIfam" id="TIGR01971">
    <property type="entry name" value="NuoI"/>
    <property type="match status" value="1"/>
</dbReference>
<dbReference type="NCBIfam" id="NF004537">
    <property type="entry name" value="PRK05888.1-3"/>
    <property type="match status" value="1"/>
</dbReference>
<dbReference type="PANTHER" id="PTHR47275">
    <property type="entry name" value="NAD(P)H-QUINONE OXIDOREDUCTASE SUBUNIT I, CHLOROPLASTIC"/>
    <property type="match status" value="1"/>
</dbReference>
<dbReference type="PANTHER" id="PTHR47275:SF1">
    <property type="entry name" value="NAD(P)H-QUINONE OXIDOREDUCTASE SUBUNIT I, CHLOROPLASTIC"/>
    <property type="match status" value="1"/>
</dbReference>
<dbReference type="Pfam" id="PF13237">
    <property type="entry name" value="Fer4_10"/>
    <property type="match status" value="1"/>
</dbReference>
<dbReference type="SUPFAM" id="SSF54862">
    <property type="entry name" value="4Fe-4S ferredoxins"/>
    <property type="match status" value="1"/>
</dbReference>
<dbReference type="PROSITE" id="PS00198">
    <property type="entry name" value="4FE4S_FER_1"/>
    <property type="match status" value="2"/>
</dbReference>
<dbReference type="PROSITE" id="PS51379">
    <property type="entry name" value="4FE4S_FER_2"/>
    <property type="match status" value="2"/>
</dbReference>
<evidence type="ECO:0000255" key="1">
    <source>
        <dbReference type="HAMAP-Rule" id="MF_01351"/>
    </source>
</evidence>
<geneLocation type="chloroplast"/>
<gene>
    <name evidence="1" type="primary">ndhI</name>
</gene>
<name>NDHI_CORPT</name>
<organism>
    <name type="scientific">Coreopsis petrophiloides</name>
    <name type="common">Tickseed</name>
    <dbReference type="NCBI Taxonomy" id="217840"/>
    <lineage>
        <taxon>Eukaryota</taxon>
        <taxon>Viridiplantae</taxon>
        <taxon>Streptophyta</taxon>
        <taxon>Embryophyta</taxon>
        <taxon>Tracheophyta</taxon>
        <taxon>Spermatophyta</taxon>
        <taxon>Magnoliopsida</taxon>
        <taxon>eudicotyledons</taxon>
        <taxon>Gunneridae</taxon>
        <taxon>Pentapetalae</taxon>
        <taxon>asterids</taxon>
        <taxon>campanulids</taxon>
        <taxon>Asterales</taxon>
        <taxon>Asteraceae</taxon>
        <taxon>Asteroideae</taxon>
        <taxon>Heliantheae alliance</taxon>
        <taxon>Coreopsideae</taxon>
        <taxon>Coreopsis</taxon>
    </lineage>
</organism>
<keyword id="KW-0004">4Fe-4S</keyword>
<keyword id="KW-0150">Chloroplast</keyword>
<keyword id="KW-0408">Iron</keyword>
<keyword id="KW-0411">Iron-sulfur</keyword>
<keyword id="KW-0472">Membrane</keyword>
<keyword id="KW-0479">Metal-binding</keyword>
<keyword id="KW-0520">NAD</keyword>
<keyword id="KW-0521">NADP</keyword>
<keyword id="KW-0934">Plastid</keyword>
<keyword id="KW-0618">Plastoquinone</keyword>
<keyword id="KW-0874">Quinone</keyword>
<keyword id="KW-0677">Repeat</keyword>
<keyword id="KW-0793">Thylakoid</keyword>
<keyword id="KW-1278">Translocase</keyword>
<feature type="chain" id="PRO_0000250771" description="NAD(P)H-quinone oxidoreductase subunit I, chloroplastic">
    <location>
        <begin position="1"/>
        <end position="166"/>
    </location>
</feature>
<feature type="domain" description="4Fe-4S ferredoxin-type 1" evidence="1">
    <location>
        <begin position="55"/>
        <end position="84"/>
    </location>
</feature>
<feature type="domain" description="4Fe-4S ferredoxin-type 2" evidence="1">
    <location>
        <begin position="95"/>
        <end position="124"/>
    </location>
</feature>
<feature type="binding site" evidence="1">
    <location>
        <position position="64"/>
    </location>
    <ligand>
        <name>[4Fe-4S] cluster</name>
        <dbReference type="ChEBI" id="CHEBI:49883"/>
        <label>1</label>
    </ligand>
</feature>
<feature type="binding site" evidence="1">
    <location>
        <position position="67"/>
    </location>
    <ligand>
        <name>[4Fe-4S] cluster</name>
        <dbReference type="ChEBI" id="CHEBI:49883"/>
        <label>1</label>
    </ligand>
</feature>
<feature type="binding site" evidence="1">
    <location>
        <position position="70"/>
    </location>
    <ligand>
        <name>[4Fe-4S] cluster</name>
        <dbReference type="ChEBI" id="CHEBI:49883"/>
        <label>1</label>
    </ligand>
</feature>
<feature type="binding site" evidence="1">
    <location>
        <position position="74"/>
    </location>
    <ligand>
        <name>[4Fe-4S] cluster</name>
        <dbReference type="ChEBI" id="CHEBI:49883"/>
        <label>2</label>
    </ligand>
</feature>
<feature type="binding site" evidence="1">
    <location>
        <position position="104"/>
    </location>
    <ligand>
        <name>[4Fe-4S] cluster</name>
        <dbReference type="ChEBI" id="CHEBI:49883"/>
        <label>2</label>
    </ligand>
</feature>
<feature type="binding site" evidence="1">
    <location>
        <position position="107"/>
    </location>
    <ligand>
        <name>[4Fe-4S] cluster</name>
        <dbReference type="ChEBI" id="CHEBI:49883"/>
        <label>2</label>
    </ligand>
</feature>
<feature type="binding site" evidence="1">
    <location>
        <position position="110"/>
    </location>
    <ligand>
        <name>[4Fe-4S] cluster</name>
        <dbReference type="ChEBI" id="CHEBI:49883"/>
        <label>2</label>
    </ligand>
</feature>
<feature type="binding site" evidence="1">
    <location>
        <position position="114"/>
    </location>
    <ligand>
        <name>[4Fe-4S] cluster</name>
        <dbReference type="ChEBI" id="CHEBI:49883"/>
        <label>1</label>
    </ligand>
</feature>
<proteinExistence type="inferred from homology"/>